<comment type="function">
    <text evidence="6">Odorant receptor.</text>
</comment>
<comment type="subcellular location">
    <subcellularLocation>
        <location>Cell membrane</location>
        <topology>Multi-pass membrane protein</topology>
    </subcellularLocation>
</comment>
<comment type="polymorphism">
    <text>Three OR2J2 alleles are known: 6M1-6*01, 6M1-6*02 and 6M1-6*03. The sequence shown is that of allele 6M1-6*01.</text>
</comment>
<comment type="similarity">
    <text evidence="2">Belongs to the G-protein coupled receptor 1 family.</text>
</comment>
<comment type="online information" name="Human Olfactory Receptor Data Exploratorium (HORDE)">
    <link uri="http://genome.weizmann.ac.il/horde/card/index/symbol:OR2J2"/>
</comment>
<accession>O76002</accession>
<accession>A6NCU9</accession>
<accession>A6NLD0</accession>
<accession>B0UY53</accession>
<accession>Q32N09</accession>
<accession>Q5ST39</accession>
<accession>Q5SUJ6</accession>
<accession>Q6IF24</accession>
<accession>Q9GZK2</accession>
<accession>Q9GZL3</accession>
<name>OR2J2_HUMAN</name>
<reference key="1">
    <citation type="book" date="2000" name="Major histocompatibility complex-evolution, structure, and function">
        <title>Polymorphic olfactory receptor genes and HLA loci constitute extended haplotypes.</title>
        <editorList>
            <person name="Kasahara M."/>
        </editorList>
        <authorList>
            <person name="Ziegler A."/>
            <person name="Ehlers A."/>
            <person name="Forbes S.A."/>
            <person name="Trowsdale J."/>
            <person name="Uchanska-Ziegler B."/>
            <person name="Volz A."/>
            <person name="Younger R."/>
            <person name="Beck S."/>
        </authorList>
    </citation>
    <scope>NUCLEOTIDE SEQUENCE [GENOMIC DNA]</scope>
    <scope>VARIANTS TYR-74; THR-111; VAL-146 AND THR-218</scope>
</reference>
<reference key="2">
    <citation type="journal article" date="2003" name="Nature">
        <title>The DNA sequence and analysis of human chromosome 6.</title>
        <authorList>
            <person name="Mungall A.J."/>
            <person name="Palmer S.A."/>
            <person name="Sims S.K."/>
            <person name="Edwards C.A."/>
            <person name="Ashurst J.L."/>
            <person name="Wilming L."/>
            <person name="Jones M.C."/>
            <person name="Horton R."/>
            <person name="Hunt S.E."/>
            <person name="Scott C.E."/>
            <person name="Gilbert J.G.R."/>
            <person name="Clamp M.E."/>
            <person name="Bethel G."/>
            <person name="Milne S."/>
            <person name="Ainscough R."/>
            <person name="Almeida J.P."/>
            <person name="Ambrose K.D."/>
            <person name="Andrews T.D."/>
            <person name="Ashwell R.I.S."/>
            <person name="Babbage A.K."/>
            <person name="Bagguley C.L."/>
            <person name="Bailey J."/>
            <person name="Banerjee R."/>
            <person name="Barker D.J."/>
            <person name="Barlow K.F."/>
            <person name="Bates K."/>
            <person name="Beare D.M."/>
            <person name="Beasley H."/>
            <person name="Beasley O."/>
            <person name="Bird C.P."/>
            <person name="Blakey S.E."/>
            <person name="Bray-Allen S."/>
            <person name="Brook J."/>
            <person name="Brown A.J."/>
            <person name="Brown J.Y."/>
            <person name="Burford D.C."/>
            <person name="Burrill W."/>
            <person name="Burton J."/>
            <person name="Carder C."/>
            <person name="Carter N.P."/>
            <person name="Chapman J.C."/>
            <person name="Clark S.Y."/>
            <person name="Clark G."/>
            <person name="Clee C.M."/>
            <person name="Clegg S."/>
            <person name="Cobley V."/>
            <person name="Collier R.E."/>
            <person name="Collins J.E."/>
            <person name="Colman L.K."/>
            <person name="Corby N.R."/>
            <person name="Coville G.J."/>
            <person name="Culley K.M."/>
            <person name="Dhami P."/>
            <person name="Davies J."/>
            <person name="Dunn M."/>
            <person name="Earthrowl M.E."/>
            <person name="Ellington A.E."/>
            <person name="Evans K.A."/>
            <person name="Faulkner L."/>
            <person name="Francis M.D."/>
            <person name="Frankish A."/>
            <person name="Frankland J."/>
            <person name="French L."/>
            <person name="Garner P."/>
            <person name="Garnett J."/>
            <person name="Ghori M.J."/>
            <person name="Gilby L.M."/>
            <person name="Gillson C.J."/>
            <person name="Glithero R.J."/>
            <person name="Grafham D.V."/>
            <person name="Grant M."/>
            <person name="Gribble S."/>
            <person name="Griffiths C."/>
            <person name="Griffiths M.N.D."/>
            <person name="Hall R."/>
            <person name="Halls K.S."/>
            <person name="Hammond S."/>
            <person name="Harley J.L."/>
            <person name="Hart E.A."/>
            <person name="Heath P.D."/>
            <person name="Heathcott R."/>
            <person name="Holmes S.J."/>
            <person name="Howden P.J."/>
            <person name="Howe K.L."/>
            <person name="Howell G.R."/>
            <person name="Huckle E."/>
            <person name="Humphray S.J."/>
            <person name="Humphries M.D."/>
            <person name="Hunt A.R."/>
            <person name="Johnson C.M."/>
            <person name="Joy A.A."/>
            <person name="Kay M."/>
            <person name="Keenan S.J."/>
            <person name="Kimberley A.M."/>
            <person name="King A."/>
            <person name="Laird G.K."/>
            <person name="Langford C."/>
            <person name="Lawlor S."/>
            <person name="Leongamornlert D.A."/>
            <person name="Leversha M."/>
            <person name="Lloyd C.R."/>
            <person name="Lloyd D.M."/>
            <person name="Loveland J.E."/>
            <person name="Lovell J."/>
            <person name="Martin S."/>
            <person name="Mashreghi-Mohammadi M."/>
            <person name="Maslen G.L."/>
            <person name="Matthews L."/>
            <person name="McCann O.T."/>
            <person name="McLaren S.J."/>
            <person name="McLay K."/>
            <person name="McMurray A."/>
            <person name="Moore M.J.F."/>
            <person name="Mullikin J.C."/>
            <person name="Niblett D."/>
            <person name="Nickerson T."/>
            <person name="Novik K.L."/>
            <person name="Oliver K."/>
            <person name="Overton-Larty E.K."/>
            <person name="Parker A."/>
            <person name="Patel R."/>
            <person name="Pearce A.V."/>
            <person name="Peck A.I."/>
            <person name="Phillimore B.J.C.T."/>
            <person name="Phillips S."/>
            <person name="Plumb R.W."/>
            <person name="Porter K.M."/>
            <person name="Ramsey Y."/>
            <person name="Ranby S.A."/>
            <person name="Rice C.M."/>
            <person name="Ross M.T."/>
            <person name="Searle S.M."/>
            <person name="Sehra H.K."/>
            <person name="Sheridan E."/>
            <person name="Skuce C.D."/>
            <person name="Smith S."/>
            <person name="Smith M."/>
            <person name="Spraggon L."/>
            <person name="Squares S.L."/>
            <person name="Steward C.A."/>
            <person name="Sycamore N."/>
            <person name="Tamlyn-Hall G."/>
            <person name="Tester J."/>
            <person name="Theaker A.J."/>
            <person name="Thomas D.W."/>
            <person name="Thorpe A."/>
            <person name="Tracey A."/>
            <person name="Tromans A."/>
            <person name="Tubby B."/>
            <person name="Wall M."/>
            <person name="Wallis J.M."/>
            <person name="West A.P."/>
            <person name="White S.S."/>
            <person name="Whitehead S.L."/>
            <person name="Whittaker H."/>
            <person name="Wild A."/>
            <person name="Willey D.J."/>
            <person name="Wilmer T.E."/>
            <person name="Wood J.M."/>
            <person name="Wray P.W."/>
            <person name="Wyatt J.C."/>
            <person name="Young L."/>
            <person name="Younger R.M."/>
            <person name="Bentley D.R."/>
            <person name="Coulson A."/>
            <person name="Durbin R.M."/>
            <person name="Hubbard T."/>
            <person name="Sulston J.E."/>
            <person name="Dunham I."/>
            <person name="Rogers J."/>
            <person name="Beck S."/>
        </authorList>
    </citation>
    <scope>NUCLEOTIDE SEQUENCE [LARGE SCALE GENOMIC DNA]</scope>
    <scope>VARIANTS TYR-74; THR-111; VAL-146 AND THR-218</scope>
</reference>
<reference key="3">
    <citation type="journal article" date="2004" name="Genome Res.">
        <title>The status, quality, and expansion of the NIH full-length cDNA project: the Mammalian Gene Collection (MGC).</title>
        <authorList>
            <consortium name="The MGC Project Team"/>
        </authorList>
    </citation>
    <scope>NUCLEOTIDE SEQUENCE [LARGE SCALE MRNA]</scope>
    <scope>VARIANTS TYR-74; VAL-146 AND THR-218</scope>
</reference>
<reference key="4">
    <citation type="journal article" date="2004" name="Proc. Natl. Acad. Sci. U.S.A.">
        <title>The human olfactory receptor gene family.</title>
        <authorList>
            <person name="Malnic B."/>
            <person name="Godfrey P.A."/>
            <person name="Buck L.B."/>
        </authorList>
    </citation>
    <scope>IDENTIFICATION</scope>
</reference>
<reference key="5">
    <citation type="journal article" date="2004" name="Proc. Natl. Acad. Sci. U.S.A.">
        <authorList>
            <person name="Malnic B."/>
            <person name="Godfrey P.A."/>
            <person name="Buck L.B."/>
        </authorList>
    </citation>
    <scope>ERRATUM OF PUBMED:14983052</scope>
</reference>
<sequence length="312" mass="35204">MMIKKNASSEDFFILLGFSNWPQLEVVLFVVILIFYLMTLTGNLFIIILSYVDSHLHTPMYFFLSNLSFLDLCHTTSSIPQLLVNLRGPEKTISYAGCMVQLYFVLALGIAECVLLVVMSYDRYVAVCRPLHYTVLMHPRFCHLLAAASWVIGFTISALHSSFTFWVPLCGHRLVDHFFCEVPALLRLSCVDTHANELTLMVMSSIFVLIPLILILTAYGAIARAVLSMQSTTGLQKVFRTCGAHLMVVSLFFIPVMCMYLQPPSENSPDQGKFIALFYTVVTPSLNPLIYTLRNKHVKGAAKRLLGWEWGK</sequence>
<feature type="chain" id="PRO_0000150483" description="Olfactory receptor 2J2">
    <location>
        <begin position="1"/>
        <end position="312"/>
    </location>
</feature>
<feature type="topological domain" description="Extracellular" evidence="1">
    <location>
        <begin position="1"/>
        <end position="26"/>
    </location>
</feature>
<feature type="transmembrane region" description="Helical; Name=1" evidence="1">
    <location>
        <begin position="27"/>
        <end position="50"/>
    </location>
</feature>
<feature type="topological domain" description="Cytoplasmic" evidence="1">
    <location>
        <begin position="51"/>
        <end position="58"/>
    </location>
</feature>
<feature type="transmembrane region" description="Helical; Name=2" evidence="1">
    <location>
        <begin position="59"/>
        <end position="80"/>
    </location>
</feature>
<feature type="topological domain" description="Extracellular" evidence="1">
    <location>
        <begin position="81"/>
        <end position="101"/>
    </location>
</feature>
<feature type="transmembrane region" description="Helical; Name=3" evidence="1">
    <location>
        <begin position="102"/>
        <end position="121"/>
    </location>
</feature>
<feature type="topological domain" description="Cytoplasmic" evidence="1">
    <location>
        <begin position="122"/>
        <end position="140"/>
    </location>
</feature>
<feature type="transmembrane region" description="Helical; Name=4" evidence="1">
    <location>
        <begin position="141"/>
        <end position="159"/>
    </location>
</feature>
<feature type="topological domain" description="Extracellular" evidence="1">
    <location>
        <begin position="160"/>
        <end position="196"/>
    </location>
</feature>
<feature type="transmembrane region" description="Helical; Name=5" evidence="1">
    <location>
        <begin position="197"/>
        <end position="220"/>
    </location>
</feature>
<feature type="topological domain" description="Cytoplasmic" evidence="1">
    <location>
        <begin position="221"/>
        <end position="237"/>
    </location>
</feature>
<feature type="transmembrane region" description="Helical; Name=6" evidence="1">
    <location>
        <begin position="238"/>
        <end position="260"/>
    </location>
</feature>
<feature type="topological domain" description="Extracellular" evidence="1">
    <location>
        <begin position="261"/>
        <end position="273"/>
    </location>
</feature>
<feature type="transmembrane region" description="Helical; Name=7" evidence="1">
    <location>
        <begin position="274"/>
        <end position="293"/>
    </location>
</feature>
<feature type="topological domain" description="Cytoplasmic" evidence="1">
    <location>
        <begin position="294"/>
        <end position="312"/>
    </location>
</feature>
<feature type="glycosylation site" description="N-linked (GlcNAc...) asparagine" evidence="1">
    <location>
        <position position="6"/>
    </location>
</feature>
<feature type="disulfide bond" evidence="2">
    <location>
        <begin position="98"/>
        <end position="190"/>
    </location>
</feature>
<feature type="sequence variant" id="VAR_010945" description="In allele 6M1-6*02 and allele 6M1-6*03; dbSNP:rs3116855." evidence="3 4 5">
    <original>H</original>
    <variation>Y</variation>
    <location>
        <position position="74"/>
    </location>
</feature>
<feature type="sequence variant" id="VAR_010946" description="In allele 6M1-6*03; dbSNP:rs3129157." evidence="3 5">
    <original>A</original>
    <variation>T</variation>
    <location>
        <position position="111"/>
    </location>
</feature>
<feature type="sequence variant" id="VAR_010947" description="In allele 6M1-6*02 and allele 6M1-6*03; dbSNP:rs3116856." evidence="3 4 5">
    <original>A</original>
    <variation>V</variation>
    <location>
        <position position="146"/>
    </location>
</feature>
<feature type="sequence variant" id="VAR_010948" description="In allele 6M1-6*02 and allele 6M1-6*03; dbSNP:rs3130743." evidence="3 4 5">
    <original>A</original>
    <variation>T</variation>
    <location>
        <position position="218"/>
    </location>
</feature>
<feature type="sequence conflict" description="In Ref. 3; AAI08897." evidence="6" ref="3">
    <original>V</original>
    <variation>A</variation>
    <location>
        <position position="26"/>
    </location>
</feature>
<keyword id="KW-1003">Cell membrane</keyword>
<keyword id="KW-1015">Disulfide bond</keyword>
<keyword id="KW-0297">G-protein coupled receptor</keyword>
<keyword id="KW-0325">Glycoprotein</keyword>
<keyword id="KW-0472">Membrane</keyword>
<keyword id="KW-0552">Olfaction</keyword>
<keyword id="KW-0675">Receptor</keyword>
<keyword id="KW-1185">Reference proteome</keyword>
<keyword id="KW-0716">Sensory transduction</keyword>
<keyword id="KW-0807">Transducer</keyword>
<keyword id="KW-0812">Transmembrane</keyword>
<keyword id="KW-1133">Transmembrane helix</keyword>
<dbReference type="EMBL" id="AJ302571">
    <property type="protein sequence ID" value="CAC20491.1"/>
    <property type="molecule type" value="Genomic_DNA"/>
</dbReference>
<dbReference type="EMBL" id="AJ302572">
    <property type="protein sequence ID" value="CAC20492.1"/>
    <property type="molecule type" value="Genomic_DNA"/>
</dbReference>
<dbReference type="EMBL" id="AJ302573">
    <property type="protein sequence ID" value="CAC20493.1"/>
    <property type="molecule type" value="Genomic_DNA"/>
</dbReference>
<dbReference type="EMBL" id="AJ302574">
    <property type="protein sequence ID" value="CAC20494.1"/>
    <property type="molecule type" value="Genomic_DNA"/>
</dbReference>
<dbReference type="EMBL" id="AJ302575">
    <property type="protein sequence ID" value="CAC20495.1"/>
    <property type="molecule type" value="Genomic_DNA"/>
</dbReference>
<dbReference type="EMBL" id="AJ302576">
    <property type="protein sequence ID" value="CAC20496.1"/>
    <property type="molecule type" value="Genomic_DNA"/>
</dbReference>
<dbReference type="EMBL" id="AJ302577">
    <property type="protein sequence ID" value="CAC20497.1"/>
    <property type="molecule type" value="Genomic_DNA"/>
</dbReference>
<dbReference type="EMBL" id="AJ302578">
    <property type="protein sequence ID" value="CAC20498.1"/>
    <property type="molecule type" value="Genomic_DNA"/>
</dbReference>
<dbReference type="EMBL" id="AJ302579">
    <property type="protein sequence ID" value="CAC20499.1"/>
    <property type="molecule type" value="Genomic_DNA"/>
</dbReference>
<dbReference type="EMBL" id="AJ302580">
    <property type="protein sequence ID" value="CAC20500.1"/>
    <property type="molecule type" value="Genomic_DNA"/>
</dbReference>
<dbReference type="EMBL" id="AJ302581">
    <property type="protein sequence ID" value="CAC20501.1"/>
    <property type="molecule type" value="Genomic_DNA"/>
</dbReference>
<dbReference type="EMBL" id="AJ302582">
    <property type="protein sequence ID" value="CAC20502.1"/>
    <property type="molecule type" value="Genomic_DNA"/>
</dbReference>
<dbReference type="EMBL" id="AJ302583">
    <property type="protein sequence ID" value="CAC20503.1"/>
    <property type="molecule type" value="Genomic_DNA"/>
</dbReference>
<dbReference type="EMBL" id="CR388415">
    <property type="status" value="NOT_ANNOTATED_CDS"/>
    <property type="molecule type" value="Genomic_DNA"/>
</dbReference>
<dbReference type="EMBL" id="AL662852">
    <property type="status" value="NOT_ANNOTATED_CDS"/>
    <property type="molecule type" value="Genomic_DNA"/>
</dbReference>
<dbReference type="EMBL" id="AL645937">
    <property type="status" value="NOT_ANNOTATED_CDS"/>
    <property type="molecule type" value="Genomic_DNA"/>
</dbReference>
<dbReference type="EMBL" id="CR759834">
    <property type="status" value="NOT_ANNOTATED_CDS"/>
    <property type="molecule type" value="Genomic_DNA"/>
</dbReference>
<dbReference type="EMBL" id="AL022727">
    <property type="protein sequence ID" value="CAA18784.1"/>
    <property type="molecule type" value="Genomic_DNA"/>
</dbReference>
<dbReference type="EMBL" id="BX248093">
    <property type="status" value="NOT_ANNOTATED_CDS"/>
    <property type="molecule type" value="Genomic_DNA"/>
</dbReference>
<dbReference type="EMBL" id="BC069121">
    <property type="protein sequence ID" value="AAH69121.1"/>
    <property type="molecule type" value="mRNA"/>
</dbReference>
<dbReference type="EMBL" id="BC108896">
    <property type="protein sequence ID" value="AAI08897.1"/>
    <property type="molecule type" value="mRNA"/>
</dbReference>
<dbReference type="EMBL" id="BC108897">
    <property type="protein sequence ID" value="AAI08898.1"/>
    <property type="molecule type" value="mRNA"/>
</dbReference>
<dbReference type="EMBL" id="BC108898">
    <property type="protein sequence ID" value="AAI08899.1"/>
    <property type="molecule type" value="mRNA"/>
</dbReference>
<dbReference type="EMBL" id="BC108899">
    <property type="protein sequence ID" value="AAI08900.1"/>
    <property type="molecule type" value="mRNA"/>
</dbReference>
<dbReference type="EMBL" id="BK004438">
    <property type="protein sequence ID" value="DAA04836.1"/>
    <property type="molecule type" value="Genomic_DNA"/>
</dbReference>
<dbReference type="CCDS" id="CCDS43434.1"/>
<dbReference type="RefSeq" id="NP_112167.2">
    <property type="nucleotide sequence ID" value="NM_030905.2"/>
</dbReference>
<dbReference type="SMR" id="O76002"/>
<dbReference type="FunCoup" id="O76002">
    <property type="interactions" value="447"/>
</dbReference>
<dbReference type="STRING" id="9606.ENSP00000493401"/>
<dbReference type="GlyCosmos" id="O76002">
    <property type="glycosylation" value="1 site, No reported glycans"/>
</dbReference>
<dbReference type="GlyGen" id="O76002">
    <property type="glycosylation" value="2 sites"/>
</dbReference>
<dbReference type="BioMuta" id="OR2J2"/>
<dbReference type="MassIVE" id="O76002"/>
<dbReference type="PaxDb" id="9606-ENSP00000366372"/>
<dbReference type="PeptideAtlas" id="O76002"/>
<dbReference type="Antibodypedia" id="57668">
    <property type="antibodies" value="58 antibodies from 16 providers"/>
</dbReference>
<dbReference type="DNASU" id="26707"/>
<dbReference type="Ensembl" id="ENST00000358688.7">
    <property type="protein sequence ID" value="ENSP00000351519.6"/>
    <property type="gene ID" value="ENSG00000196231.7"/>
</dbReference>
<dbReference type="Ensembl" id="ENST00000377167.3">
    <property type="protein sequence ID" value="ENSP00000366372.2"/>
    <property type="gene ID" value="ENSG00000204700.5"/>
</dbReference>
<dbReference type="Ensembl" id="ENST00000411588.4">
    <property type="protein sequence ID" value="ENSP00000396524.3"/>
    <property type="gene ID" value="ENSG00000231676.4"/>
</dbReference>
<dbReference type="Ensembl" id="ENST00000415857.3">
    <property type="protein sequence ID" value="ENSP00000392497.2"/>
    <property type="gene ID" value="ENSG00000226000.4"/>
</dbReference>
<dbReference type="Ensembl" id="ENST00000419605.3">
    <property type="protein sequence ID" value="ENSP00000408988.2"/>
    <property type="gene ID" value="ENSG00000232945.4"/>
</dbReference>
<dbReference type="Ensembl" id="ENST00000427744.3">
    <property type="protein sequence ID" value="ENSP00000403186.2"/>
    <property type="gene ID" value="ENSG00000234746.4"/>
</dbReference>
<dbReference type="Ensembl" id="ENST00000440124.4">
    <property type="protein sequence ID" value="ENSP00000398238.3"/>
    <property type="gene ID" value="ENSG00000225550.4"/>
</dbReference>
<dbReference type="Ensembl" id="ENST00000457762.3">
    <property type="protein sequence ID" value="ENSP00000416299.2"/>
    <property type="gene ID" value="ENSG00000226347.4"/>
</dbReference>
<dbReference type="GeneID" id="26707"/>
<dbReference type="KEGG" id="hsa:26707"/>
<dbReference type="UCSC" id="uc011dlm.3">
    <property type="organism name" value="human"/>
</dbReference>
<dbReference type="AGR" id="HGNC:8260"/>
<dbReference type="CTD" id="26707"/>
<dbReference type="DisGeNET" id="26707"/>
<dbReference type="GeneCards" id="OR2J2"/>
<dbReference type="HGNC" id="HGNC:8260">
    <property type="gene designation" value="OR2J2"/>
</dbReference>
<dbReference type="HPA" id="ENSG00000204700">
    <property type="expression patterns" value="Not detected"/>
</dbReference>
<dbReference type="neXtProt" id="NX_O76002"/>
<dbReference type="PharmGKB" id="PA32177"/>
<dbReference type="VEuPathDB" id="HostDB:ENSG00000204700"/>
<dbReference type="eggNOG" id="ENOG502RU1S">
    <property type="taxonomic scope" value="Eukaryota"/>
</dbReference>
<dbReference type="HOGENOM" id="CLU_012526_1_2_1"/>
<dbReference type="InParanoid" id="O76002"/>
<dbReference type="OrthoDB" id="5950740at2759"/>
<dbReference type="PAN-GO" id="O76002">
    <property type="GO annotations" value="0 GO annotations based on evolutionary models"/>
</dbReference>
<dbReference type="PhylomeDB" id="O76002"/>
<dbReference type="TreeFam" id="TF336512"/>
<dbReference type="PathwayCommons" id="O76002"/>
<dbReference type="Reactome" id="R-HSA-381753">
    <property type="pathway name" value="Olfactory Signaling Pathway"/>
</dbReference>
<dbReference type="Reactome" id="R-HSA-9752946">
    <property type="pathway name" value="Expression and translocation of olfactory receptors"/>
</dbReference>
<dbReference type="BioGRID-ORCS" id="26707">
    <property type="hits" value="12 hits in 639 CRISPR screens"/>
</dbReference>
<dbReference type="GeneWiki" id="OR2J2"/>
<dbReference type="GenomeRNAi" id="26707"/>
<dbReference type="Pharos" id="O76002">
    <property type="development level" value="Tdark"/>
</dbReference>
<dbReference type="PRO" id="PR:O76002"/>
<dbReference type="Proteomes" id="UP000005640">
    <property type="component" value="Chromosome 6"/>
</dbReference>
<dbReference type="RNAct" id="O76002">
    <property type="molecule type" value="protein"/>
</dbReference>
<dbReference type="Bgee" id="ENSG00000204700">
    <property type="expression patterns" value="Expressed in male germ line stem cell (sensu Vertebrata) in testis and 7 other cell types or tissues"/>
</dbReference>
<dbReference type="ExpressionAtlas" id="O76002">
    <property type="expression patterns" value="baseline and differential"/>
</dbReference>
<dbReference type="GO" id="GO:0005886">
    <property type="term" value="C:plasma membrane"/>
    <property type="evidence" value="ECO:0000318"/>
    <property type="project" value="GO_Central"/>
</dbReference>
<dbReference type="GO" id="GO:0004930">
    <property type="term" value="F:G protein-coupled receptor activity"/>
    <property type="evidence" value="ECO:0007669"/>
    <property type="project" value="UniProtKB-KW"/>
</dbReference>
<dbReference type="GO" id="GO:0004984">
    <property type="term" value="F:olfactory receptor activity"/>
    <property type="evidence" value="ECO:0000318"/>
    <property type="project" value="GO_Central"/>
</dbReference>
<dbReference type="GO" id="GO:0050911">
    <property type="term" value="P:detection of chemical stimulus involved in sensory perception of smell"/>
    <property type="evidence" value="ECO:0000318"/>
    <property type="project" value="GO_Central"/>
</dbReference>
<dbReference type="CDD" id="cd15947">
    <property type="entry name" value="7tmA_OR2B-like"/>
    <property type="match status" value="1"/>
</dbReference>
<dbReference type="FunFam" id="1.10.1220.70:FF:000001">
    <property type="entry name" value="Olfactory receptor"/>
    <property type="match status" value="1"/>
</dbReference>
<dbReference type="FunFam" id="1.20.1070.10:FF:000005">
    <property type="entry name" value="Olfactory receptor"/>
    <property type="match status" value="1"/>
</dbReference>
<dbReference type="Gene3D" id="1.20.1070.10">
    <property type="entry name" value="Rhodopsin 7-helix transmembrane proteins"/>
    <property type="match status" value="1"/>
</dbReference>
<dbReference type="InterPro" id="IPR000276">
    <property type="entry name" value="GPCR_Rhodpsn"/>
</dbReference>
<dbReference type="InterPro" id="IPR017452">
    <property type="entry name" value="GPCR_Rhodpsn_7TM"/>
</dbReference>
<dbReference type="InterPro" id="IPR000725">
    <property type="entry name" value="Olfact_rcpt"/>
</dbReference>
<dbReference type="PANTHER" id="PTHR26453">
    <property type="entry name" value="OLFACTORY RECEPTOR"/>
    <property type="match status" value="1"/>
</dbReference>
<dbReference type="Pfam" id="PF13853">
    <property type="entry name" value="7tm_4"/>
    <property type="match status" value="1"/>
</dbReference>
<dbReference type="PRINTS" id="PR00237">
    <property type="entry name" value="GPCRRHODOPSN"/>
</dbReference>
<dbReference type="PRINTS" id="PR00245">
    <property type="entry name" value="OLFACTORYR"/>
</dbReference>
<dbReference type="SUPFAM" id="SSF81321">
    <property type="entry name" value="Family A G protein-coupled receptor-like"/>
    <property type="match status" value="1"/>
</dbReference>
<dbReference type="PROSITE" id="PS00237">
    <property type="entry name" value="G_PROTEIN_RECEP_F1_1"/>
    <property type="match status" value="1"/>
</dbReference>
<dbReference type="PROSITE" id="PS50262">
    <property type="entry name" value="G_PROTEIN_RECEP_F1_2"/>
    <property type="match status" value="1"/>
</dbReference>
<evidence type="ECO:0000255" key="1"/>
<evidence type="ECO:0000255" key="2">
    <source>
        <dbReference type="PROSITE-ProRule" id="PRU00521"/>
    </source>
</evidence>
<evidence type="ECO:0000269" key="3">
    <source>
    </source>
</evidence>
<evidence type="ECO:0000269" key="4">
    <source>
    </source>
</evidence>
<evidence type="ECO:0000269" key="5">
    <source ref="1"/>
</evidence>
<evidence type="ECO:0000305" key="6"/>
<protein>
    <recommendedName>
        <fullName>Olfactory receptor 2J2</fullName>
    </recommendedName>
    <alternativeName>
        <fullName>Hs6M1-6</fullName>
    </alternativeName>
    <alternativeName>
        <fullName>Olfactory receptor 6-8</fullName>
        <shortName>OR6-8</shortName>
    </alternativeName>
    <alternativeName>
        <fullName>Olfactory receptor OR6-19</fullName>
    </alternativeName>
</protein>
<organism>
    <name type="scientific">Homo sapiens</name>
    <name type="common">Human</name>
    <dbReference type="NCBI Taxonomy" id="9606"/>
    <lineage>
        <taxon>Eukaryota</taxon>
        <taxon>Metazoa</taxon>
        <taxon>Chordata</taxon>
        <taxon>Craniata</taxon>
        <taxon>Vertebrata</taxon>
        <taxon>Euteleostomi</taxon>
        <taxon>Mammalia</taxon>
        <taxon>Eutheria</taxon>
        <taxon>Euarchontoglires</taxon>
        <taxon>Primates</taxon>
        <taxon>Haplorrhini</taxon>
        <taxon>Catarrhini</taxon>
        <taxon>Hominidae</taxon>
        <taxon>Homo</taxon>
    </lineage>
</organism>
<proteinExistence type="evidence at transcript level"/>
<gene>
    <name type="primary">OR2J2</name>
</gene>